<gene>
    <name evidence="1" type="primary">gltX</name>
    <name type="ordered locus">MSMEG_2383</name>
    <name type="ordered locus">MSMEI_2323</name>
</gene>
<evidence type="ECO:0000255" key="1">
    <source>
        <dbReference type="HAMAP-Rule" id="MF_00022"/>
    </source>
</evidence>
<accession>A0QUY7</accession>
<accession>I7FJ34</accession>
<organism>
    <name type="scientific">Mycolicibacterium smegmatis (strain ATCC 700084 / mc(2)155)</name>
    <name type="common">Mycobacterium smegmatis</name>
    <dbReference type="NCBI Taxonomy" id="246196"/>
    <lineage>
        <taxon>Bacteria</taxon>
        <taxon>Bacillati</taxon>
        <taxon>Actinomycetota</taxon>
        <taxon>Actinomycetes</taxon>
        <taxon>Mycobacteriales</taxon>
        <taxon>Mycobacteriaceae</taxon>
        <taxon>Mycolicibacterium</taxon>
    </lineage>
</organism>
<reference key="1">
    <citation type="submission" date="2006-10" db="EMBL/GenBank/DDBJ databases">
        <authorList>
            <person name="Fleischmann R.D."/>
            <person name="Dodson R.J."/>
            <person name="Haft D.H."/>
            <person name="Merkel J.S."/>
            <person name="Nelson W.C."/>
            <person name="Fraser C.M."/>
        </authorList>
    </citation>
    <scope>NUCLEOTIDE SEQUENCE [LARGE SCALE GENOMIC DNA]</scope>
    <source>
        <strain>ATCC 700084 / mc(2)155</strain>
    </source>
</reference>
<reference key="2">
    <citation type="journal article" date="2007" name="Genome Biol.">
        <title>Interrupted coding sequences in Mycobacterium smegmatis: authentic mutations or sequencing errors?</title>
        <authorList>
            <person name="Deshayes C."/>
            <person name="Perrodou E."/>
            <person name="Gallien S."/>
            <person name="Euphrasie D."/>
            <person name="Schaeffer C."/>
            <person name="Van-Dorsselaer A."/>
            <person name="Poch O."/>
            <person name="Lecompte O."/>
            <person name="Reyrat J.-M."/>
        </authorList>
    </citation>
    <scope>NUCLEOTIDE SEQUENCE [LARGE SCALE GENOMIC DNA]</scope>
    <source>
        <strain>ATCC 700084 / mc(2)155</strain>
    </source>
</reference>
<reference key="3">
    <citation type="journal article" date="2009" name="Genome Res.">
        <title>Ortho-proteogenomics: multiple proteomes investigation through orthology and a new MS-based protocol.</title>
        <authorList>
            <person name="Gallien S."/>
            <person name="Perrodou E."/>
            <person name="Carapito C."/>
            <person name="Deshayes C."/>
            <person name="Reyrat J.-M."/>
            <person name="Van Dorsselaer A."/>
            <person name="Poch O."/>
            <person name="Schaeffer C."/>
            <person name="Lecompte O."/>
        </authorList>
    </citation>
    <scope>NUCLEOTIDE SEQUENCE [LARGE SCALE GENOMIC DNA]</scope>
    <scope>IDENTIFICATION BY MASS SPECTROMETRY [LARGE SCALE ANALYSIS]</scope>
    <source>
        <strain>ATCC 700084 / mc(2)155</strain>
    </source>
</reference>
<keyword id="KW-0030">Aminoacyl-tRNA synthetase</keyword>
<keyword id="KW-0067">ATP-binding</keyword>
<keyword id="KW-0963">Cytoplasm</keyword>
<keyword id="KW-0436">Ligase</keyword>
<keyword id="KW-0547">Nucleotide-binding</keyword>
<keyword id="KW-0648">Protein biosynthesis</keyword>
<keyword id="KW-1185">Reference proteome</keyword>
<name>SYE_MYCS2</name>
<feature type="chain" id="PRO_0000330980" description="Glutamate--tRNA ligase">
    <location>
        <begin position="1"/>
        <end position="486"/>
    </location>
</feature>
<feature type="short sequence motif" description="'HIGH' region" evidence="1">
    <location>
        <begin position="12"/>
        <end position="22"/>
    </location>
</feature>
<feature type="short sequence motif" description="'KMSKS' region" evidence="1">
    <location>
        <begin position="256"/>
        <end position="260"/>
    </location>
</feature>
<feature type="binding site" evidence="1">
    <location>
        <position position="259"/>
    </location>
    <ligand>
        <name>ATP</name>
        <dbReference type="ChEBI" id="CHEBI:30616"/>
    </ligand>
</feature>
<protein>
    <recommendedName>
        <fullName evidence="1">Glutamate--tRNA ligase</fullName>
        <ecNumber evidence="1">6.1.1.17</ecNumber>
    </recommendedName>
    <alternativeName>
        <fullName evidence="1">Glutamyl-tRNA synthetase</fullName>
        <shortName evidence="1">GluRS</shortName>
    </alternativeName>
</protein>
<proteinExistence type="evidence at protein level"/>
<dbReference type="EC" id="6.1.1.17" evidence="1"/>
<dbReference type="EMBL" id="CP000480">
    <property type="protein sequence ID" value="ABK74186.1"/>
    <property type="molecule type" value="Genomic_DNA"/>
</dbReference>
<dbReference type="EMBL" id="CP001663">
    <property type="protein sequence ID" value="AFP38793.1"/>
    <property type="molecule type" value="Genomic_DNA"/>
</dbReference>
<dbReference type="RefSeq" id="WP_011728308.1">
    <property type="nucleotide sequence ID" value="NZ_SIJM01000012.1"/>
</dbReference>
<dbReference type="RefSeq" id="YP_886725.1">
    <property type="nucleotide sequence ID" value="NC_008596.1"/>
</dbReference>
<dbReference type="SMR" id="A0QUY7"/>
<dbReference type="STRING" id="246196.MSMEG_2383"/>
<dbReference type="PaxDb" id="246196-MSMEI_2323"/>
<dbReference type="GeneID" id="93457174"/>
<dbReference type="KEGG" id="msb:LJ00_11850"/>
<dbReference type="KEGG" id="msg:MSMEI_2323"/>
<dbReference type="KEGG" id="msm:MSMEG_2383"/>
<dbReference type="PATRIC" id="fig|246196.19.peg.2349"/>
<dbReference type="eggNOG" id="COG0008">
    <property type="taxonomic scope" value="Bacteria"/>
</dbReference>
<dbReference type="OrthoDB" id="9807503at2"/>
<dbReference type="Proteomes" id="UP000000757">
    <property type="component" value="Chromosome"/>
</dbReference>
<dbReference type="Proteomes" id="UP000006158">
    <property type="component" value="Chromosome"/>
</dbReference>
<dbReference type="GO" id="GO:0005829">
    <property type="term" value="C:cytosol"/>
    <property type="evidence" value="ECO:0007669"/>
    <property type="project" value="TreeGrafter"/>
</dbReference>
<dbReference type="GO" id="GO:0005524">
    <property type="term" value="F:ATP binding"/>
    <property type="evidence" value="ECO:0007669"/>
    <property type="project" value="UniProtKB-UniRule"/>
</dbReference>
<dbReference type="GO" id="GO:0004818">
    <property type="term" value="F:glutamate-tRNA ligase activity"/>
    <property type="evidence" value="ECO:0007669"/>
    <property type="project" value="UniProtKB-UniRule"/>
</dbReference>
<dbReference type="GO" id="GO:0000049">
    <property type="term" value="F:tRNA binding"/>
    <property type="evidence" value="ECO:0007669"/>
    <property type="project" value="InterPro"/>
</dbReference>
<dbReference type="GO" id="GO:0008270">
    <property type="term" value="F:zinc ion binding"/>
    <property type="evidence" value="ECO:0007669"/>
    <property type="project" value="InterPro"/>
</dbReference>
<dbReference type="GO" id="GO:0006424">
    <property type="term" value="P:glutamyl-tRNA aminoacylation"/>
    <property type="evidence" value="ECO:0007669"/>
    <property type="project" value="UniProtKB-UniRule"/>
</dbReference>
<dbReference type="CDD" id="cd00808">
    <property type="entry name" value="GluRS_core"/>
    <property type="match status" value="1"/>
</dbReference>
<dbReference type="FunFam" id="3.40.50.620:FF:000149">
    <property type="entry name" value="Glutamate--tRNA ligase"/>
    <property type="match status" value="1"/>
</dbReference>
<dbReference type="Gene3D" id="1.10.10.350">
    <property type="match status" value="1"/>
</dbReference>
<dbReference type="Gene3D" id="1.10.8.70">
    <property type="entry name" value="Glutamate-tRNA synthetase, class I, anticodon-binding domain 1"/>
    <property type="match status" value="1"/>
</dbReference>
<dbReference type="Gene3D" id="1.10.1160.10">
    <property type="entry name" value="Glutamyl-trna Synthetase, Domain 2"/>
    <property type="match status" value="1"/>
</dbReference>
<dbReference type="Gene3D" id="3.90.800.10">
    <property type="entry name" value="Glutamyl-tRNA Synthetase, Domain 3"/>
    <property type="match status" value="1"/>
</dbReference>
<dbReference type="Gene3D" id="3.40.50.620">
    <property type="entry name" value="HUPs"/>
    <property type="match status" value="1"/>
</dbReference>
<dbReference type="HAMAP" id="MF_00022">
    <property type="entry name" value="Glu_tRNA_synth_type1"/>
    <property type="match status" value="1"/>
</dbReference>
<dbReference type="InterPro" id="IPR045462">
    <property type="entry name" value="aa-tRNA-synth_I_cd-bd"/>
</dbReference>
<dbReference type="InterPro" id="IPR020751">
    <property type="entry name" value="aa-tRNA-synth_I_codon-bd_sub2"/>
</dbReference>
<dbReference type="InterPro" id="IPR008925">
    <property type="entry name" value="aa_tRNA-synth_I_cd-bd_sf"/>
</dbReference>
<dbReference type="InterPro" id="IPR004527">
    <property type="entry name" value="Glu-tRNA-ligase_bac/mito"/>
</dbReference>
<dbReference type="InterPro" id="IPR020752">
    <property type="entry name" value="Glu-tRNA-synth_I_codon-bd_sub1"/>
</dbReference>
<dbReference type="InterPro" id="IPR000924">
    <property type="entry name" value="Glu/Gln-tRNA-synth"/>
</dbReference>
<dbReference type="InterPro" id="IPR020058">
    <property type="entry name" value="Glu/Gln-tRNA-synth_Ib_cat-dom"/>
</dbReference>
<dbReference type="InterPro" id="IPR020061">
    <property type="entry name" value="Glu_tRNA_lig_a-bdl"/>
</dbReference>
<dbReference type="InterPro" id="IPR049940">
    <property type="entry name" value="GluQ/Sye"/>
</dbReference>
<dbReference type="InterPro" id="IPR033910">
    <property type="entry name" value="GluRS_core"/>
</dbReference>
<dbReference type="InterPro" id="IPR014729">
    <property type="entry name" value="Rossmann-like_a/b/a_fold"/>
</dbReference>
<dbReference type="NCBIfam" id="TIGR00464">
    <property type="entry name" value="gltX_bact"/>
    <property type="match status" value="1"/>
</dbReference>
<dbReference type="PANTHER" id="PTHR43311">
    <property type="entry name" value="GLUTAMATE--TRNA LIGASE"/>
    <property type="match status" value="1"/>
</dbReference>
<dbReference type="PANTHER" id="PTHR43311:SF2">
    <property type="entry name" value="GLUTAMATE--TRNA LIGASE, MITOCHONDRIAL-RELATED"/>
    <property type="match status" value="1"/>
</dbReference>
<dbReference type="Pfam" id="PF19269">
    <property type="entry name" value="Anticodon_2"/>
    <property type="match status" value="1"/>
</dbReference>
<dbReference type="Pfam" id="PF00749">
    <property type="entry name" value="tRNA-synt_1c"/>
    <property type="match status" value="1"/>
</dbReference>
<dbReference type="PRINTS" id="PR00987">
    <property type="entry name" value="TRNASYNTHGLU"/>
</dbReference>
<dbReference type="SUPFAM" id="SSF48163">
    <property type="entry name" value="An anticodon-binding domain of class I aminoacyl-tRNA synthetases"/>
    <property type="match status" value="1"/>
</dbReference>
<dbReference type="SUPFAM" id="SSF52374">
    <property type="entry name" value="Nucleotidylyl transferase"/>
    <property type="match status" value="1"/>
</dbReference>
<comment type="function">
    <text evidence="1">Catalyzes the attachment of glutamate to tRNA(Glu) in a two-step reaction: glutamate is first activated by ATP to form Glu-AMP and then transferred to the acceptor end of tRNA(Glu).</text>
</comment>
<comment type="catalytic activity">
    <reaction evidence="1">
        <text>tRNA(Glu) + L-glutamate + ATP = L-glutamyl-tRNA(Glu) + AMP + diphosphate</text>
        <dbReference type="Rhea" id="RHEA:23540"/>
        <dbReference type="Rhea" id="RHEA-COMP:9663"/>
        <dbReference type="Rhea" id="RHEA-COMP:9680"/>
        <dbReference type="ChEBI" id="CHEBI:29985"/>
        <dbReference type="ChEBI" id="CHEBI:30616"/>
        <dbReference type="ChEBI" id="CHEBI:33019"/>
        <dbReference type="ChEBI" id="CHEBI:78442"/>
        <dbReference type="ChEBI" id="CHEBI:78520"/>
        <dbReference type="ChEBI" id="CHEBI:456215"/>
        <dbReference type="EC" id="6.1.1.17"/>
    </reaction>
</comment>
<comment type="subunit">
    <text evidence="1">Monomer.</text>
</comment>
<comment type="subcellular location">
    <subcellularLocation>
        <location evidence="1">Cytoplasm</location>
    </subcellularLocation>
</comment>
<comment type="similarity">
    <text evidence="1">Belongs to the class-I aminoacyl-tRNA synthetase family. Glutamate--tRNA ligase type 1 subfamily.</text>
</comment>
<sequence>MTTKKVRVRFCPSPTGTPHVGLVRTALFNWAYARHTGGDFVFRIEDTDAARDSDESYAAILDALRWLGMDWDEGPEVGGPYEPYRQSQRREIYRDVVARLLEAGEVYEAYSTPEEVEARHLAAGRNPKLGYDNYDRDLTDAQRKAFADEGRRPVLRLRMPDEDLSWNDLVRGPTTFAAGSVPDFAITRSNGDPLYTLVNPVDDALMKITHVLRGEDILPSTPRQIALYRALMRIGVAEFVPEFAHLPSVLGEGNKKLSKRDPQSNLFLHRDRGFIPEGLLNYLALLGWGIADDHDVFSLDEMVAAFDVADVNSNPARFDQKKADAINAEHIRMLAPEDFTARLREYFVTHGYDTTLDDAAFAEAAALVQTRVVVLGDAWGLLKFFNDDAYEIDEKSAAKELKPESAAVLDAALSALEAVGDWTTPAIEAALKTALLEGLELKPRKAFGPIRVAVTGAAVSPPLFESMELLGRDRSLARLRAARDRV</sequence>